<gene>
    <name type="ordered locus">At1g14910</name>
    <name type="ORF">F10B6.32</name>
</gene>
<reference key="1">
    <citation type="journal article" date="1999" name="DNA Res.">
        <title>Characterization of a single-copy Arabidopsis gene encoding a protein showing limited similarity to the N-terminus of the mammalian clathrin-assembly protein AP180.</title>
        <authorList>
            <person name="Gupta R."/>
            <person name="Gray J.C."/>
        </authorList>
    </citation>
    <scope>NUCLEOTIDE SEQUENCE [GENOMIC DNA / MRNA]</scope>
    <scope>TISSUE SPECIFICITY</scope>
    <source>
        <strain>cv. Columbia</strain>
        <strain>cv. Landsberg erecta</strain>
    </source>
</reference>
<reference key="2">
    <citation type="journal article" date="2000" name="Nature">
        <title>Sequence and analysis of chromosome 1 of the plant Arabidopsis thaliana.</title>
        <authorList>
            <person name="Theologis A."/>
            <person name="Ecker J.R."/>
            <person name="Palm C.J."/>
            <person name="Federspiel N.A."/>
            <person name="Kaul S."/>
            <person name="White O."/>
            <person name="Alonso J."/>
            <person name="Altafi H."/>
            <person name="Araujo R."/>
            <person name="Bowman C.L."/>
            <person name="Brooks S.Y."/>
            <person name="Buehler E."/>
            <person name="Chan A."/>
            <person name="Chao Q."/>
            <person name="Chen H."/>
            <person name="Cheuk R.F."/>
            <person name="Chin C.W."/>
            <person name="Chung M.K."/>
            <person name="Conn L."/>
            <person name="Conway A.B."/>
            <person name="Conway A.R."/>
            <person name="Creasy T.H."/>
            <person name="Dewar K."/>
            <person name="Dunn P."/>
            <person name="Etgu P."/>
            <person name="Feldblyum T.V."/>
            <person name="Feng J.-D."/>
            <person name="Fong B."/>
            <person name="Fujii C.Y."/>
            <person name="Gill J.E."/>
            <person name="Goldsmith A.D."/>
            <person name="Haas B."/>
            <person name="Hansen N.F."/>
            <person name="Hughes B."/>
            <person name="Huizar L."/>
            <person name="Hunter J.L."/>
            <person name="Jenkins J."/>
            <person name="Johnson-Hopson C."/>
            <person name="Khan S."/>
            <person name="Khaykin E."/>
            <person name="Kim C.J."/>
            <person name="Koo H.L."/>
            <person name="Kremenetskaia I."/>
            <person name="Kurtz D.B."/>
            <person name="Kwan A."/>
            <person name="Lam B."/>
            <person name="Langin-Hooper S."/>
            <person name="Lee A."/>
            <person name="Lee J.M."/>
            <person name="Lenz C.A."/>
            <person name="Li J.H."/>
            <person name="Li Y.-P."/>
            <person name="Lin X."/>
            <person name="Liu S.X."/>
            <person name="Liu Z.A."/>
            <person name="Luros J.S."/>
            <person name="Maiti R."/>
            <person name="Marziali A."/>
            <person name="Militscher J."/>
            <person name="Miranda M."/>
            <person name="Nguyen M."/>
            <person name="Nierman W.C."/>
            <person name="Osborne B.I."/>
            <person name="Pai G."/>
            <person name="Peterson J."/>
            <person name="Pham P.K."/>
            <person name="Rizzo M."/>
            <person name="Rooney T."/>
            <person name="Rowley D."/>
            <person name="Sakano H."/>
            <person name="Salzberg S.L."/>
            <person name="Schwartz J.R."/>
            <person name="Shinn P."/>
            <person name="Southwick A.M."/>
            <person name="Sun H."/>
            <person name="Tallon L.J."/>
            <person name="Tambunga G."/>
            <person name="Toriumi M.J."/>
            <person name="Town C.D."/>
            <person name="Utterback T."/>
            <person name="Van Aken S."/>
            <person name="Vaysberg M."/>
            <person name="Vysotskaia V.S."/>
            <person name="Walker M."/>
            <person name="Wu D."/>
            <person name="Yu G."/>
            <person name="Fraser C.M."/>
            <person name="Venter J.C."/>
            <person name="Davis R.W."/>
        </authorList>
    </citation>
    <scope>NUCLEOTIDE SEQUENCE [LARGE SCALE GENOMIC DNA]</scope>
    <source>
        <strain>cv. Columbia</strain>
    </source>
</reference>
<reference key="3">
    <citation type="journal article" date="2017" name="Plant J.">
        <title>Araport11: a complete reannotation of the Arabidopsis thaliana reference genome.</title>
        <authorList>
            <person name="Cheng C.Y."/>
            <person name="Krishnakumar V."/>
            <person name="Chan A.P."/>
            <person name="Thibaud-Nissen F."/>
            <person name="Schobel S."/>
            <person name="Town C.D."/>
        </authorList>
    </citation>
    <scope>GENOME REANNOTATION</scope>
    <source>
        <strain>cv. Columbia</strain>
    </source>
</reference>
<reference key="4">
    <citation type="journal article" date="2003" name="Science">
        <title>Empirical analysis of transcriptional activity in the Arabidopsis genome.</title>
        <authorList>
            <person name="Yamada K."/>
            <person name="Lim J."/>
            <person name="Dale J.M."/>
            <person name="Chen H."/>
            <person name="Shinn P."/>
            <person name="Palm C.J."/>
            <person name="Southwick A.M."/>
            <person name="Wu H.C."/>
            <person name="Kim C.J."/>
            <person name="Nguyen M."/>
            <person name="Pham P.K."/>
            <person name="Cheuk R.F."/>
            <person name="Karlin-Newmann G."/>
            <person name="Liu S.X."/>
            <person name="Lam B."/>
            <person name="Sakano H."/>
            <person name="Wu T."/>
            <person name="Yu G."/>
            <person name="Miranda M."/>
            <person name="Quach H.L."/>
            <person name="Tripp M."/>
            <person name="Chang C.H."/>
            <person name="Lee J.M."/>
            <person name="Toriumi M.J."/>
            <person name="Chan M.M."/>
            <person name="Tang C.C."/>
            <person name="Onodera C.S."/>
            <person name="Deng J.M."/>
            <person name="Akiyama K."/>
            <person name="Ansari Y."/>
            <person name="Arakawa T."/>
            <person name="Banh J."/>
            <person name="Banno F."/>
            <person name="Bowser L."/>
            <person name="Brooks S.Y."/>
            <person name="Carninci P."/>
            <person name="Chao Q."/>
            <person name="Choy N."/>
            <person name="Enju A."/>
            <person name="Goldsmith A.D."/>
            <person name="Gurjal M."/>
            <person name="Hansen N.F."/>
            <person name="Hayashizaki Y."/>
            <person name="Johnson-Hopson C."/>
            <person name="Hsuan V.W."/>
            <person name="Iida K."/>
            <person name="Karnes M."/>
            <person name="Khan S."/>
            <person name="Koesema E."/>
            <person name="Ishida J."/>
            <person name="Jiang P.X."/>
            <person name="Jones T."/>
            <person name="Kawai J."/>
            <person name="Kamiya A."/>
            <person name="Meyers C."/>
            <person name="Nakajima M."/>
            <person name="Narusaka M."/>
            <person name="Seki M."/>
            <person name="Sakurai T."/>
            <person name="Satou M."/>
            <person name="Tamse R."/>
            <person name="Vaysberg M."/>
            <person name="Wallender E.K."/>
            <person name="Wong C."/>
            <person name="Yamamura Y."/>
            <person name="Yuan S."/>
            <person name="Shinozaki K."/>
            <person name="Davis R.W."/>
            <person name="Theologis A."/>
            <person name="Ecker J.R."/>
        </authorList>
    </citation>
    <scope>NUCLEOTIDE SEQUENCE [LARGE SCALE MRNA]</scope>
    <source>
        <strain>cv. Columbia</strain>
    </source>
</reference>
<keyword id="KW-0168">Coated pit</keyword>
<keyword id="KW-0968">Cytoplasmic vesicle</keyword>
<keyword id="KW-0254">Endocytosis</keyword>
<keyword id="KW-0333">Golgi apparatus</keyword>
<keyword id="KW-0472">Membrane</keyword>
<keyword id="KW-0597">Phosphoprotein</keyword>
<keyword id="KW-1185">Reference proteome</keyword>
<keyword id="KW-0677">Repeat</keyword>
<organism>
    <name type="scientific">Arabidopsis thaliana</name>
    <name type="common">Mouse-ear cress</name>
    <dbReference type="NCBI Taxonomy" id="3702"/>
    <lineage>
        <taxon>Eukaryota</taxon>
        <taxon>Viridiplantae</taxon>
        <taxon>Streptophyta</taxon>
        <taxon>Embryophyta</taxon>
        <taxon>Tracheophyta</taxon>
        <taxon>Spermatophyta</taxon>
        <taxon>Magnoliopsida</taxon>
        <taxon>eudicotyledons</taxon>
        <taxon>Gunneridae</taxon>
        <taxon>Pentapetalae</taxon>
        <taxon>rosids</taxon>
        <taxon>malvids</taxon>
        <taxon>Brassicales</taxon>
        <taxon>Brassicaceae</taxon>
        <taxon>Camelineae</taxon>
        <taxon>Arabidopsis</taxon>
    </lineage>
</organism>
<dbReference type="EMBL" id="Y10863">
    <property type="protein sequence ID" value="CAA71817.1"/>
    <property type="molecule type" value="mRNA"/>
</dbReference>
<dbReference type="EMBL" id="Y10864">
    <property type="protein sequence ID" value="CAA71818.1"/>
    <property type="molecule type" value="mRNA"/>
</dbReference>
<dbReference type="EMBL" id="Y10986">
    <property type="protein sequence ID" value="CAA71879.1"/>
    <property type="status" value="ALT_SEQ"/>
    <property type="molecule type" value="Genomic_DNA"/>
</dbReference>
<dbReference type="EMBL" id="Y10987">
    <property type="protein sequence ID" value="CAA71880.1"/>
    <property type="molecule type" value="mRNA"/>
</dbReference>
<dbReference type="EMBL" id="AC006917">
    <property type="protein sequence ID" value="AAF79231.1"/>
    <property type="status" value="ALT_SEQ"/>
    <property type="molecule type" value="Genomic_DNA"/>
</dbReference>
<dbReference type="EMBL" id="CP002684">
    <property type="protein sequence ID" value="AEE29241.1"/>
    <property type="molecule type" value="Genomic_DNA"/>
</dbReference>
<dbReference type="EMBL" id="AY096496">
    <property type="protein sequence ID" value="AAM20134.1"/>
    <property type="molecule type" value="mRNA"/>
</dbReference>
<dbReference type="PIR" id="G86282">
    <property type="entry name" value="G86282"/>
</dbReference>
<dbReference type="PIR" id="T52617">
    <property type="entry name" value="T52617"/>
</dbReference>
<dbReference type="PIR" id="T52618">
    <property type="entry name" value="T52618"/>
</dbReference>
<dbReference type="RefSeq" id="NP_172944.1">
    <property type="nucleotide sequence ID" value="NM_101360.4"/>
</dbReference>
<dbReference type="SMR" id="P94017"/>
<dbReference type="FunCoup" id="P94017">
    <property type="interactions" value="2541"/>
</dbReference>
<dbReference type="STRING" id="3702.P94017"/>
<dbReference type="GlyGen" id="P94017">
    <property type="glycosylation" value="1 site"/>
</dbReference>
<dbReference type="PaxDb" id="3702-AT1G14910.1"/>
<dbReference type="ProteomicsDB" id="239191"/>
<dbReference type="EnsemblPlants" id="AT1G14910.1">
    <property type="protein sequence ID" value="AT1G14910.1"/>
    <property type="gene ID" value="AT1G14910"/>
</dbReference>
<dbReference type="GeneID" id="838056"/>
<dbReference type="Gramene" id="AT1G14910.1">
    <property type="protein sequence ID" value="AT1G14910.1"/>
    <property type="gene ID" value="AT1G14910"/>
</dbReference>
<dbReference type="KEGG" id="ath:AT1G14910"/>
<dbReference type="Araport" id="AT1G14910"/>
<dbReference type="TAIR" id="AT1G14910">
    <property type="gene designation" value="PICALM1B"/>
</dbReference>
<dbReference type="eggNOG" id="KOG0251">
    <property type="taxonomic scope" value="Eukaryota"/>
</dbReference>
<dbReference type="HOGENOM" id="CLU_014098_2_0_1"/>
<dbReference type="InParanoid" id="P94017"/>
<dbReference type="OMA" id="ANHNHII"/>
<dbReference type="PhylomeDB" id="P94017"/>
<dbReference type="PRO" id="PR:P94017"/>
<dbReference type="Proteomes" id="UP000006548">
    <property type="component" value="Chromosome 1"/>
</dbReference>
<dbReference type="ExpressionAtlas" id="P94017">
    <property type="expression patterns" value="baseline and differential"/>
</dbReference>
<dbReference type="GO" id="GO:0005905">
    <property type="term" value="C:clathrin-coated pit"/>
    <property type="evidence" value="ECO:0007669"/>
    <property type="project" value="UniProtKB-SubCell"/>
</dbReference>
<dbReference type="GO" id="GO:0030136">
    <property type="term" value="C:clathrin-coated vesicle"/>
    <property type="evidence" value="ECO:0007669"/>
    <property type="project" value="UniProtKB-SubCell"/>
</dbReference>
<dbReference type="GO" id="GO:0005576">
    <property type="term" value="C:extracellular region"/>
    <property type="evidence" value="ECO:0007005"/>
    <property type="project" value="TAIR"/>
</dbReference>
<dbReference type="GO" id="GO:0005794">
    <property type="term" value="C:Golgi apparatus"/>
    <property type="evidence" value="ECO:0007669"/>
    <property type="project" value="UniProtKB-SubCell"/>
</dbReference>
<dbReference type="GO" id="GO:0005545">
    <property type="term" value="F:1-phosphatidylinositol binding"/>
    <property type="evidence" value="ECO:0007669"/>
    <property type="project" value="InterPro"/>
</dbReference>
<dbReference type="GO" id="GO:0030276">
    <property type="term" value="F:clathrin binding"/>
    <property type="evidence" value="ECO:0000314"/>
    <property type="project" value="TAIR"/>
</dbReference>
<dbReference type="GO" id="GO:0000149">
    <property type="term" value="F:SNARE binding"/>
    <property type="evidence" value="ECO:0000353"/>
    <property type="project" value="TAIR"/>
</dbReference>
<dbReference type="GO" id="GO:0048268">
    <property type="term" value="P:clathrin coat assembly"/>
    <property type="evidence" value="ECO:0007669"/>
    <property type="project" value="InterPro"/>
</dbReference>
<dbReference type="GO" id="GO:0072583">
    <property type="term" value="P:clathrin-dependent endocytosis"/>
    <property type="evidence" value="ECO:0000314"/>
    <property type="project" value="TAIR"/>
</dbReference>
<dbReference type="CDD" id="cd03564">
    <property type="entry name" value="ANTH_N"/>
    <property type="match status" value="1"/>
</dbReference>
<dbReference type="FunFam" id="1.25.40.90:FF:000005">
    <property type="entry name" value="Clathrin assembly protein AP180"/>
    <property type="match status" value="1"/>
</dbReference>
<dbReference type="FunFam" id="1.20.58.150:FF:000003">
    <property type="entry name" value="Putative clathrin assembly protein"/>
    <property type="match status" value="1"/>
</dbReference>
<dbReference type="Gene3D" id="1.25.40.90">
    <property type="match status" value="1"/>
</dbReference>
<dbReference type="Gene3D" id="1.20.58.150">
    <property type="entry name" value="ANTH domain"/>
    <property type="match status" value="1"/>
</dbReference>
<dbReference type="InterPro" id="IPR011417">
    <property type="entry name" value="ANTH_dom"/>
</dbReference>
<dbReference type="InterPro" id="IPR014712">
    <property type="entry name" value="ANTH_dom_sf"/>
</dbReference>
<dbReference type="InterPro" id="IPR048050">
    <property type="entry name" value="ANTH_N_plant"/>
</dbReference>
<dbReference type="InterPro" id="IPR045192">
    <property type="entry name" value="AP180-like"/>
</dbReference>
<dbReference type="InterPro" id="IPR013809">
    <property type="entry name" value="ENTH"/>
</dbReference>
<dbReference type="InterPro" id="IPR008942">
    <property type="entry name" value="ENTH_VHS"/>
</dbReference>
<dbReference type="PANTHER" id="PTHR22951">
    <property type="entry name" value="CLATHRIN ASSEMBLY PROTEIN"/>
    <property type="match status" value="1"/>
</dbReference>
<dbReference type="PANTHER" id="PTHR22951:SF82">
    <property type="entry name" value="ENTH DOMAIN-CONTAINING PROTEIN"/>
    <property type="match status" value="1"/>
</dbReference>
<dbReference type="Pfam" id="PF07651">
    <property type="entry name" value="ANTH"/>
    <property type="match status" value="1"/>
</dbReference>
<dbReference type="SMART" id="SM00273">
    <property type="entry name" value="ENTH"/>
    <property type="match status" value="1"/>
</dbReference>
<dbReference type="SUPFAM" id="SSF48464">
    <property type="entry name" value="ENTH/VHS domain"/>
    <property type="match status" value="1"/>
</dbReference>
<dbReference type="SUPFAM" id="SSF89009">
    <property type="entry name" value="GAT-like domain"/>
    <property type="match status" value="1"/>
</dbReference>
<dbReference type="PROSITE" id="PS50942">
    <property type="entry name" value="ENTH"/>
    <property type="match status" value="1"/>
</dbReference>
<name>CAP9_ARATH</name>
<feature type="chain" id="PRO_0000187075" description="Putative clathrin assembly protein At1g14910">
    <location>
        <begin position="1"/>
        <end position="692"/>
    </location>
</feature>
<feature type="domain" description="ENTH" evidence="3">
    <location>
        <begin position="24"/>
        <end position="161"/>
    </location>
</feature>
<feature type="repeat" description="1">
    <location>
        <begin position="532"/>
        <end position="548"/>
    </location>
</feature>
<feature type="repeat" description="2; truncated">
    <location>
        <begin position="549"/>
        <end position="564"/>
    </location>
</feature>
<feature type="repeat" description="3">
    <location>
        <begin position="565"/>
        <end position="581"/>
    </location>
</feature>
<feature type="repeat" description="4">
    <location>
        <begin position="582"/>
        <end position="598"/>
    </location>
</feature>
<feature type="repeat" description="5">
    <location>
        <begin position="599"/>
        <end position="615"/>
    </location>
</feature>
<feature type="repeat" description="6">
    <location>
        <begin position="616"/>
        <end position="632"/>
    </location>
</feature>
<feature type="repeat" description="7">
    <location>
        <begin position="633"/>
        <end position="649"/>
    </location>
</feature>
<feature type="repeat" description="8">
    <location>
        <begin position="650"/>
        <end position="666"/>
    </location>
</feature>
<feature type="region of interest" description="Disordered" evidence="4">
    <location>
        <begin position="325"/>
        <end position="383"/>
    </location>
</feature>
<feature type="region of interest" description="8 X 17 AA approximate tandem repeats">
    <location>
        <begin position="532"/>
        <end position="666"/>
    </location>
</feature>
<feature type="compositionally biased region" description="Polar residues" evidence="4">
    <location>
        <begin position="357"/>
        <end position="376"/>
    </location>
</feature>
<feature type="modified residue" description="Phosphoserine" evidence="2">
    <location>
        <position position="363"/>
    </location>
</feature>
<proteinExistence type="evidence at transcript level"/>
<evidence type="ECO:0000250" key="1"/>
<evidence type="ECO:0000250" key="2">
    <source>
        <dbReference type="UniProtKB" id="Q9LHS0"/>
    </source>
</evidence>
<evidence type="ECO:0000255" key="3">
    <source>
        <dbReference type="PROSITE-ProRule" id="PRU00243"/>
    </source>
</evidence>
<evidence type="ECO:0000256" key="4">
    <source>
        <dbReference type="SAM" id="MobiDB-lite"/>
    </source>
</evidence>
<evidence type="ECO:0000269" key="5">
    <source>
    </source>
</evidence>
<evidence type="ECO:0000305" key="6"/>
<comment type="subcellular location">
    <subcellularLocation>
        <location evidence="1">Membrane</location>
        <location evidence="1">Clathrin-coated pit</location>
    </subcellularLocation>
    <subcellularLocation>
        <location evidence="1">Golgi apparatus</location>
    </subcellularLocation>
    <subcellularLocation>
        <location evidence="1">Cytoplasmic vesicle</location>
        <location evidence="1">Clathrin-coated vesicle</location>
    </subcellularLocation>
    <text evidence="1">Colocalized with clathrin in the Golgi area.</text>
</comment>
<comment type="tissue specificity">
    <text evidence="5">Expressed in the whole plant.</text>
</comment>
<comment type="sequence caution" evidence="6">
    <conflict type="erroneous gene model prediction">
        <sequence resource="EMBL-CDS" id="AAF79231"/>
    </conflict>
</comment>
<comment type="sequence caution" evidence="6">
    <conflict type="erroneous gene model prediction">
        <sequence resource="EMBL-CDS" id="CAA71879"/>
    </conflict>
</comment>
<accession>P94017</accession>
<accession>Q8L644</accession>
<accession>Q9LQU0</accession>
<sequence length="692" mass="75516">MGTLQSWRRAYGALKDTTKVGLVRVNSDYAELDVAIVKATNHVECPPKDRHLRKIFLATSAIRPRADVAYCIHALSRRLHKTRNWTVALKALLVIHRLLRDGDPTFREELLNFSQKGRIMQISNFKDDSSPVAWDCSGWVRTYALFLEERLECFRVLKYDIEAERLPKVSPGQEKGYSKTRDLDGEKLLEQLPALQQLLHRLIGCKPEGAAKHNHIIQYALSLVLKESFKVYCAINEGIINLVEKFFEMPRHEAIKALEIYKRAGLQAGNLSAFYEVCKGLELARNFQFPVLREPPQSFLTTMEEYMRDAPQMVDVTSGPLLLTYTPDDGLTSEDVGPSHEEHETSSPSDSAVVPSEETQLSSQSPPSVETPQNFIDTDDLLGLHDDTPDPLAILDQNALALALVSNDVDSSPFSFGQARDLDPSGWELALVTTPSNDISAATERQLAGGLDTLTLNSLYDDGALRAAQQPAYGVPASNPFEVQDLFAFSDSVSPPSAVNNPFGLYEPTYHQQEQQPQLQVAPSPANPFGDFGEFPIVPVSEPQSTTSFGAFPVPVSEPSNTTGFGEIPVVPVTEPPNTTAFGEFPVVPVSEPQNITGFGALPVTPASEPSNTTGFGEFPVVSVSAPQNTTGFGALPVIPVSEPSKTTGLGEFPVVPVSEPQNTTGFGEFPVNAGAHEQHNSNNPFGSTGFL</sequence>
<protein>
    <recommendedName>
        <fullName>Putative clathrin assembly protein At1g14910</fullName>
    </recommendedName>
</protein>